<gene>
    <name evidence="1" type="primary">rpmE2</name>
    <name type="ordered locus">KPK_4245</name>
</gene>
<keyword id="KW-0687">Ribonucleoprotein</keyword>
<keyword id="KW-0689">Ribosomal protein</keyword>
<dbReference type="EMBL" id="CP000964">
    <property type="protein sequence ID" value="ACI10115.1"/>
    <property type="molecule type" value="Genomic_DNA"/>
</dbReference>
<dbReference type="SMR" id="B5Y0Q4"/>
<dbReference type="KEGG" id="kpe:KPK_4245"/>
<dbReference type="HOGENOM" id="CLU_114306_2_1_6"/>
<dbReference type="Proteomes" id="UP000001734">
    <property type="component" value="Chromosome"/>
</dbReference>
<dbReference type="GO" id="GO:1990904">
    <property type="term" value="C:ribonucleoprotein complex"/>
    <property type="evidence" value="ECO:0007669"/>
    <property type="project" value="UniProtKB-KW"/>
</dbReference>
<dbReference type="GO" id="GO:0005840">
    <property type="term" value="C:ribosome"/>
    <property type="evidence" value="ECO:0007669"/>
    <property type="project" value="UniProtKB-KW"/>
</dbReference>
<dbReference type="GO" id="GO:0003735">
    <property type="term" value="F:structural constituent of ribosome"/>
    <property type="evidence" value="ECO:0007669"/>
    <property type="project" value="InterPro"/>
</dbReference>
<dbReference type="GO" id="GO:0006412">
    <property type="term" value="P:translation"/>
    <property type="evidence" value="ECO:0007669"/>
    <property type="project" value="UniProtKB-UniRule"/>
</dbReference>
<dbReference type="Gene3D" id="4.10.830.30">
    <property type="entry name" value="Ribosomal protein L31"/>
    <property type="match status" value="1"/>
</dbReference>
<dbReference type="HAMAP" id="MF_00502">
    <property type="entry name" value="Ribosomal_bL31_2"/>
    <property type="match status" value="1"/>
</dbReference>
<dbReference type="InterPro" id="IPR034704">
    <property type="entry name" value="Ribosomal_bL28/bL31-like_sf"/>
</dbReference>
<dbReference type="InterPro" id="IPR002150">
    <property type="entry name" value="Ribosomal_bL31"/>
</dbReference>
<dbReference type="InterPro" id="IPR027493">
    <property type="entry name" value="Ribosomal_bL31_B"/>
</dbReference>
<dbReference type="InterPro" id="IPR042105">
    <property type="entry name" value="Ribosomal_bL31_sf"/>
</dbReference>
<dbReference type="NCBIfam" id="TIGR00105">
    <property type="entry name" value="L31"/>
    <property type="match status" value="1"/>
</dbReference>
<dbReference type="NCBIfam" id="NF002462">
    <property type="entry name" value="PRK01678.1"/>
    <property type="match status" value="1"/>
</dbReference>
<dbReference type="PANTHER" id="PTHR33280">
    <property type="entry name" value="50S RIBOSOMAL PROTEIN L31, CHLOROPLASTIC"/>
    <property type="match status" value="1"/>
</dbReference>
<dbReference type="PANTHER" id="PTHR33280:SF1">
    <property type="entry name" value="LARGE RIBOSOMAL SUBUNIT PROTEIN BL31C"/>
    <property type="match status" value="1"/>
</dbReference>
<dbReference type="Pfam" id="PF01197">
    <property type="entry name" value="Ribosomal_L31"/>
    <property type="match status" value="1"/>
</dbReference>
<dbReference type="PRINTS" id="PR01249">
    <property type="entry name" value="RIBOSOMALL31"/>
</dbReference>
<dbReference type="SUPFAM" id="SSF143800">
    <property type="entry name" value="L28p-like"/>
    <property type="match status" value="1"/>
</dbReference>
<organism>
    <name type="scientific">Klebsiella pneumoniae (strain 342)</name>
    <dbReference type="NCBI Taxonomy" id="507522"/>
    <lineage>
        <taxon>Bacteria</taxon>
        <taxon>Pseudomonadati</taxon>
        <taxon>Pseudomonadota</taxon>
        <taxon>Gammaproteobacteria</taxon>
        <taxon>Enterobacterales</taxon>
        <taxon>Enterobacteriaceae</taxon>
        <taxon>Klebsiella/Raoultella group</taxon>
        <taxon>Klebsiella</taxon>
        <taxon>Klebsiella pneumoniae complex</taxon>
    </lineage>
</organism>
<name>RL31B_KLEP3</name>
<accession>B5Y0Q4</accession>
<protein>
    <recommendedName>
        <fullName evidence="1">Large ribosomal subunit protein bL31B</fullName>
    </recommendedName>
    <alternativeName>
        <fullName evidence="2">50S ribosomal protein L31 type B</fullName>
    </alternativeName>
</protein>
<sequence length="87" mass="9945">MKAHIHPPYRTVVFHDTSVNEYFKVGSTIRTDRVIELDGETFPYVTIDVSSKSHPYYTGKQKTFASEGSAARFRQRFGGFIDAKRKA</sequence>
<proteinExistence type="inferred from homology"/>
<comment type="subunit">
    <text evidence="1">Part of the 50S ribosomal subunit.</text>
</comment>
<comment type="similarity">
    <text evidence="1">Belongs to the bacterial ribosomal protein bL31 family. Type B subfamily.</text>
</comment>
<evidence type="ECO:0000255" key="1">
    <source>
        <dbReference type="HAMAP-Rule" id="MF_00502"/>
    </source>
</evidence>
<evidence type="ECO:0000305" key="2"/>
<reference key="1">
    <citation type="journal article" date="2008" name="PLoS Genet.">
        <title>Complete genome sequence of the N2-fixing broad host range endophyte Klebsiella pneumoniae 342 and virulence predictions verified in mice.</title>
        <authorList>
            <person name="Fouts D.E."/>
            <person name="Tyler H.L."/>
            <person name="DeBoy R.T."/>
            <person name="Daugherty S."/>
            <person name="Ren Q."/>
            <person name="Badger J.H."/>
            <person name="Durkin A.S."/>
            <person name="Huot H."/>
            <person name="Shrivastava S."/>
            <person name="Kothari S."/>
            <person name="Dodson R.J."/>
            <person name="Mohamoud Y."/>
            <person name="Khouri H."/>
            <person name="Roesch L.F.W."/>
            <person name="Krogfelt K.A."/>
            <person name="Struve C."/>
            <person name="Triplett E.W."/>
            <person name="Methe B.A."/>
        </authorList>
    </citation>
    <scope>NUCLEOTIDE SEQUENCE [LARGE SCALE GENOMIC DNA]</scope>
    <source>
        <strain>342</strain>
    </source>
</reference>
<feature type="chain" id="PRO_1000126811" description="Large ribosomal subunit protein bL31B">
    <location>
        <begin position="1"/>
        <end position="87"/>
    </location>
</feature>